<feature type="chain" id="PRO_1000196439" description="Small ribosomal subunit protein bS16">
    <location>
        <begin position="1"/>
        <end position="155"/>
    </location>
</feature>
<feature type="region of interest" description="Disordered" evidence="2">
    <location>
        <begin position="113"/>
        <end position="155"/>
    </location>
</feature>
<feature type="compositionally biased region" description="Acidic residues" evidence="2">
    <location>
        <begin position="136"/>
        <end position="146"/>
    </location>
</feature>
<gene>
    <name evidence="1" type="primary">rpsP</name>
    <name type="ordered locus">MAB_3229c</name>
</gene>
<proteinExistence type="inferred from homology"/>
<comment type="similarity">
    <text evidence="1">Belongs to the bacterial ribosomal protein bS16 family.</text>
</comment>
<reference key="1">
    <citation type="journal article" date="2009" name="PLoS ONE">
        <title>Non mycobacterial virulence genes in the genome of the emerging pathogen Mycobacterium abscessus.</title>
        <authorList>
            <person name="Ripoll F."/>
            <person name="Pasek S."/>
            <person name="Schenowitz C."/>
            <person name="Dossat C."/>
            <person name="Barbe V."/>
            <person name="Rottman M."/>
            <person name="Macheras E."/>
            <person name="Heym B."/>
            <person name="Herrmann J.L."/>
            <person name="Daffe M."/>
            <person name="Brosch R."/>
            <person name="Risler J.L."/>
            <person name="Gaillard J.L."/>
        </authorList>
    </citation>
    <scope>NUCLEOTIDE SEQUENCE [LARGE SCALE GENOMIC DNA]</scope>
    <source>
        <strain>ATCC 19977 / DSM 44196 / CCUG 20993 / CIP 104536 / JCM 13569 / NCTC 13031 / TMC 1543 / L948</strain>
    </source>
</reference>
<sequence length="155" mass="16837">MAVKIKLTRLGKIRNPQYRIQVADARTRREGRAIEVIGRYHPKEEPSLIEIDSERAQYWLSVGAQPTDPVLALLKITGDWQKFKGLPGAEGTLKVKEPKPSKLDLFNAALAEADGAPTGEAIQQKKKKAPKKAEAAEAEAPAEEPAAESADAASE</sequence>
<organism>
    <name type="scientific">Mycobacteroides abscessus (strain ATCC 19977 / DSM 44196 / CCUG 20993 / CIP 104536 / JCM 13569 / NCTC 13031 / TMC 1543 / L948)</name>
    <name type="common">Mycobacterium abscessus</name>
    <dbReference type="NCBI Taxonomy" id="561007"/>
    <lineage>
        <taxon>Bacteria</taxon>
        <taxon>Bacillati</taxon>
        <taxon>Actinomycetota</taxon>
        <taxon>Actinomycetes</taxon>
        <taxon>Mycobacteriales</taxon>
        <taxon>Mycobacteriaceae</taxon>
        <taxon>Mycobacteroides</taxon>
        <taxon>Mycobacteroides abscessus</taxon>
    </lineage>
</organism>
<name>RS16_MYCA9</name>
<protein>
    <recommendedName>
        <fullName evidence="1">Small ribosomal subunit protein bS16</fullName>
    </recommendedName>
    <alternativeName>
        <fullName evidence="3">30S ribosomal protein S16</fullName>
    </alternativeName>
</protein>
<accession>B1MDI6</accession>
<dbReference type="EMBL" id="CU458896">
    <property type="protein sequence ID" value="CAM63305.1"/>
    <property type="molecule type" value="Genomic_DNA"/>
</dbReference>
<dbReference type="RefSeq" id="WP_005111678.1">
    <property type="nucleotide sequence ID" value="NZ_MLCG01000001.1"/>
</dbReference>
<dbReference type="SMR" id="B1MDI6"/>
<dbReference type="GeneID" id="93380160"/>
<dbReference type="KEGG" id="mab:MAB_3229c"/>
<dbReference type="Proteomes" id="UP000007137">
    <property type="component" value="Chromosome"/>
</dbReference>
<dbReference type="GO" id="GO:0005737">
    <property type="term" value="C:cytoplasm"/>
    <property type="evidence" value="ECO:0007669"/>
    <property type="project" value="UniProtKB-ARBA"/>
</dbReference>
<dbReference type="GO" id="GO:0015935">
    <property type="term" value="C:small ribosomal subunit"/>
    <property type="evidence" value="ECO:0007669"/>
    <property type="project" value="TreeGrafter"/>
</dbReference>
<dbReference type="GO" id="GO:0003735">
    <property type="term" value="F:structural constituent of ribosome"/>
    <property type="evidence" value="ECO:0007669"/>
    <property type="project" value="InterPro"/>
</dbReference>
<dbReference type="GO" id="GO:0006412">
    <property type="term" value="P:translation"/>
    <property type="evidence" value="ECO:0007669"/>
    <property type="project" value="UniProtKB-UniRule"/>
</dbReference>
<dbReference type="Gene3D" id="3.30.1320.10">
    <property type="match status" value="1"/>
</dbReference>
<dbReference type="HAMAP" id="MF_00385">
    <property type="entry name" value="Ribosomal_bS16"/>
    <property type="match status" value="1"/>
</dbReference>
<dbReference type="InterPro" id="IPR000307">
    <property type="entry name" value="Ribosomal_bS16"/>
</dbReference>
<dbReference type="InterPro" id="IPR020592">
    <property type="entry name" value="Ribosomal_bS16_CS"/>
</dbReference>
<dbReference type="InterPro" id="IPR023803">
    <property type="entry name" value="Ribosomal_bS16_dom_sf"/>
</dbReference>
<dbReference type="NCBIfam" id="NF011093">
    <property type="entry name" value="PRK14520.1"/>
    <property type="match status" value="1"/>
</dbReference>
<dbReference type="NCBIfam" id="TIGR00002">
    <property type="entry name" value="S16"/>
    <property type="match status" value="1"/>
</dbReference>
<dbReference type="PANTHER" id="PTHR12919">
    <property type="entry name" value="30S RIBOSOMAL PROTEIN S16"/>
    <property type="match status" value="1"/>
</dbReference>
<dbReference type="PANTHER" id="PTHR12919:SF20">
    <property type="entry name" value="SMALL RIBOSOMAL SUBUNIT PROTEIN BS16M"/>
    <property type="match status" value="1"/>
</dbReference>
<dbReference type="Pfam" id="PF00886">
    <property type="entry name" value="Ribosomal_S16"/>
    <property type="match status" value="1"/>
</dbReference>
<dbReference type="SUPFAM" id="SSF54565">
    <property type="entry name" value="Ribosomal protein S16"/>
    <property type="match status" value="1"/>
</dbReference>
<dbReference type="PROSITE" id="PS00732">
    <property type="entry name" value="RIBOSOMAL_S16"/>
    <property type="match status" value="1"/>
</dbReference>
<evidence type="ECO:0000255" key="1">
    <source>
        <dbReference type="HAMAP-Rule" id="MF_00385"/>
    </source>
</evidence>
<evidence type="ECO:0000256" key="2">
    <source>
        <dbReference type="SAM" id="MobiDB-lite"/>
    </source>
</evidence>
<evidence type="ECO:0000305" key="3"/>
<keyword id="KW-1185">Reference proteome</keyword>
<keyword id="KW-0687">Ribonucleoprotein</keyword>
<keyword id="KW-0689">Ribosomal protein</keyword>